<name>FCG3A_PIG</name>
<protein>
    <recommendedName>
        <fullName evidence="8 9">Low affinity immunoglobulin gamma Fc region receptor III-A</fullName>
        <shortName>IgG Fc receptor III-A</shortName>
    </recommendedName>
    <alternativeName>
        <fullName evidence="9">Cytolytic trigger molecule G7</fullName>
    </alternativeName>
    <alternativeName>
        <fullName>Fc-gamma RIII</fullName>
        <shortName>FcRIII</shortName>
    </alternativeName>
    <alternativeName>
        <fullName>Fc-gamma RIII-alpha</fullName>
        <shortName evidence="8">FcgammaRIIIA</shortName>
    </alternativeName>
    <cdAntigenName evidence="2">CD16a</cdAntigenName>
</protein>
<organism>
    <name type="scientific">Sus scrofa</name>
    <name type="common">Pig</name>
    <dbReference type="NCBI Taxonomy" id="9823"/>
    <lineage>
        <taxon>Eukaryota</taxon>
        <taxon>Metazoa</taxon>
        <taxon>Chordata</taxon>
        <taxon>Craniata</taxon>
        <taxon>Vertebrata</taxon>
        <taxon>Euteleostomi</taxon>
        <taxon>Mammalia</taxon>
        <taxon>Eutheria</taxon>
        <taxon>Laurasiatheria</taxon>
        <taxon>Artiodactyla</taxon>
        <taxon>Suina</taxon>
        <taxon>Suidae</taxon>
        <taxon>Sus</taxon>
    </lineage>
</organism>
<reference key="1">
    <citation type="journal article" date="1994" name="J. Immunol.">
        <title>Molecular cloning and identification of the porcine cytolytic trigger molecule G7 as a Fc gamma RIII alpha (CD16) homologue.</title>
        <authorList>
            <person name="Halloran P.J."/>
            <person name="Sweeney S.E."/>
            <person name="Strohmeier C.M."/>
            <person name="Kim Y.B."/>
        </authorList>
    </citation>
    <scope>NUCLEOTIDE SEQUENCE [MRNA]</scope>
    <scope>PROTEIN SEQUENCE OF 27-47; 92-107 AND 179-188</scope>
    <scope>GLYCOSYLATION AT ASN-181 (VARIANT ASN-181)</scope>
    <scope>GLYCOSYLATION AT ASN-64; ASN-134 AND ASN-162</scope>
    <scope>VARIANTS</scope>
    <scope>POLYMORPHISM</scope>
    <scope>TISSUE SPECIFICITY</scope>
    <source>
        <strain>Minnesota miniature</strain>
    </source>
</reference>
<reference key="2">
    <citation type="journal article" date="1994" name="Bull. World Health Organ.">
        <title>Nomenclature of Fc receptors. IUIS/WHO Subcommittee on Nomenclature of Fc receptors.</title>
        <authorList>
            <person name="Conrad D."/>
            <person name="Cooper M."/>
            <person name="Fridman W.H."/>
            <person name="Kinet J.P."/>
            <person name="Ravetch J."/>
        </authorList>
    </citation>
    <scope>NOMENCLATURE</scope>
</reference>
<reference key="3">
    <citation type="journal article" date="2019" name="PLoS ONE">
        <title>Binding affinities of human IgG1 and chimerized pig and rabbit derivatives to human, pig and rabbit Fc gamma receptor IIIA.</title>
        <authorList>
            <person name="Bhatti M.M."/>
            <person name="Cai A.G."/>
            <person name="Theunissen J.W."/>
        </authorList>
    </citation>
    <scope>FUNCTION</scope>
</reference>
<reference key="4">
    <citation type="journal article" date="2021" name="Antib Ther">
        <title>Cross-species higher sensitivities of FcgammaRIIIA/FcgammaRIV to afucosylated IgG for enhanced ADCC.</title>
        <authorList>
            <person name="Mao C."/>
            <person name="Near R."/>
            <person name="Zhong X."/>
            <person name="Gao W."/>
        </authorList>
    </citation>
    <scope>FUNCTION</scope>
</reference>
<keyword id="KW-1003">Cell membrane</keyword>
<keyword id="KW-0903">Direct protein sequencing</keyword>
<keyword id="KW-1015">Disulfide bond</keyword>
<keyword id="KW-0325">Glycoprotein</keyword>
<keyword id="KW-0390">IgG-binding protein</keyword>
<keyword id="KW-0393">Immunoglobulin domain</keyword>
<keyword id="KW-0472">Membrane</keyword>
<keyword id="KW-0675">Receptor</keyword>
<keyword id="KW-1185">Reference proteome</keyword>
<keyword id="KW-0677">Repeat</keyword>
<keyword id="KW-0732">Signal</keyword>
<keyword id="KW-0812">Transmembrane</keyword>
<keyword id="KW-1133">Transmembrane helix</keyword>
<proteinExistence type="evidence at protein level"/>
<accession>Q28942</accession>
<accession>Q28940</accession>
<accession>Q28941</accession>
<gene>
    <name evidence="2" type="primary">FCGR3A</name>
    <name type="synonym">FCGR3</name>
</gene>
<sequence>MWQLLSPTALLLLVSVPGTHAEDPPKSVVILDPPWDRLLEKDSVTLKCQGAYPPRDDSTEWRWNGTLISNKASSYSITDATVGNSGEYTCKTGLSAQSDPLRLEVYKGWLLLQAPRWVVQEGESIRLRCHTWKNITIQKVQYFQNGMGKKFSHQNFEYHIPNATLKDGGSYFCRGIIKNYDLSSEPVKVTVQGSKSPSPILSFFLPWHQIIFCLVMGFLFAVDTGLYFSVRKVLRSSKEDWRNGKVTWSRDPADKGG</sequence>
<feature type="signal peptide" evidence="3">
    <location>
        <begin position="1"/>
        <end position="19"/>
    </location>
</feature>
<feature type="chain" id="PRO_0000015155" description="Low affinity immunoglobulin gamma Fc region receptor III-A">
    <location>
        <begin position="20"/>
        <end position="257"/>
    </location>
</feature>
<feature type="topological domain" description="Extracellular" evidence="3">
    <location>
        <begin position="20"/>
        <end position="209"/>
    </location>
</feature>
<feature type="transmembrane region" description="Helical" evidence="3">
    <location>
        <begin position="210"/>
        <end position="230"/>
    </location>
</feature>
<feature type="topological domain" description="Cytoplasmic" evidence="3">
    <location>
        <begin position="231"/>
        <end position="257"/>
    </location>
</feature>
<feature type="domain" description="Ig-like C2-type 1">
    <location>
        <begin position="25"/>
        <end position="104"/>
    </location>
</feature>
<feature type="domain" description="Ig-like C2-type 2">
    <location>
        <begin position="108"/>
        <end position="190"/>
    </location>
</feature>
<feature type="site" description="Important for receptor turnover" evidence="2">
    <location>
        <position position="223"/>
    </location>
</feature>
<feature type="glycosylation site" description="N-linked (GlcNAc...) asparagine" evidence="7">
    <location>
        <position position="64"/>
    </location>
</feature>
<feature type="glycosylation site" description="N-linked (GlcNAc...) asparagine" evidence="7">
    <location>
        <position position="134"/>
    </location>
</feature>
<feature type="glycosylation site" description="N-linked (GlcNAc...) asparagine" evidence="7">
    <location>
        <position position="162"/>
    </location>
</feature>
<feature type="glycosylation site" description="N-linked (GlcNAc...) asparagine; in variant N-181" evidence="7">
    <location>
        <position position="181"/>
    </location>
</feature>
<feature type="disulfide bond" evidence="4">
    <location>
        <begin position="48"/>
        <end position="90"/>
    </location>
</feature>
<feature type="disulfide bond" evidence="4">
    <location>
        <begin position="129"/>
        <end position="173"/>
    </location>
</feature>
<feature type="sequence variant" description="In clone 284.4.">
    <original>R</original>
    <variation>G</variation>
    <location>
        <position position="55"/>
    </location>
</feature>
<feature type="sequence variant" description="In clone 334.8.">
    <original>K</original>
    <variation>M</variation>
    <location>
        <position position="149"/>
    </location>
</feature>
<feature type="sequence variant" description="In clone 334.8.">
    <original>D</original>
    <variation>N</variation>
    <location>
        <position position="181"/>
    </location>
</feature>
<feature type="sequence variant" description="In clone 334.8.">
    <original>P</original>
    <variation>A</variation>
    <location>
        <position position="186"/>
    </location>
</feature>
<comment type="function">
    <text evidence="1 2 5 6">Receptor for the invariable Fc fragment of immunoglobulin gamma (IgG) (PubMed:31323052). Optimally activated upon binding of clustered antigen-IgG complexes displayed on cell surfaces, triggers lysis of antibody-coated cells, a process known as antibody-dependent cellular cytotoxicity (ADCC). Does not bind free monomeric IgG, thus avoiding inappropriate effector cell activation in the absence of antigenic trigger (By similarity). Mediates IgG effector functions on natural killer (NK) cells. Binds antigen-IgG complexes generated upon infection and triggers NK cell-dependent cytokine production and degranulation to limit viral load and propagation (By similarity). Fc-binding subunit that associates with FCER1G adapter to form functional signaling complexes. Following the engagement of antigen-IgG complexes, triggers phosphorylation of immunoreceptor tyrosine-based activation motif (ITAM)-containing adapter with subsequent activation of phosphatidylinositol 3-kinase signaling and sustained elevation of intracellular calcium that ultimately drive NK cell activation (By similarity). Mediates enhanced ADCC in response to afucosylated IgGs (PubMed:34485821).</text>
</comment>
<comment type="subunit">
    <text evidence="2">Forms a heterooligomeric complex with ITAM-containing signaling subunits FCER1G. Interacts (via transmembrane domain) with signaling subunits; this interaction is a prerequisite for receptor complex expression on the cell surface and intracellular signal transduction. Binds the Fc region of antigen-complexed IgG.</text>
</comment>
<comment type="subcellular location">
    <subcellularLocation>
        <location evidence="2">Cell membrane</location>
        <topology evidence="3">Single-pass membrane protein</topology>
    </subcellularLocation>
</comment>
<comment type="tissue specificity">
    <text evidence="7">Expressed in polymorphonuclear leukocytes, pulmonary alveolar macrophages and peripheral blood mononuclear cells (at protein level) (PubMed:8077673). Found in spleen, and at very low levels in lymph nodes but not in thymus or liver (PubMed:8077673).</text>
</comment>
<evidence type="ECO:0000250" key="1">
    <source>
        <dbReference type="UniProtKB" id="A0A0B4J1G0"/>
    </source>
</evidence>
<evidence type="ECO:0000250" key="2">
    <source>
        <dbReference type="UniProtKB" id="P08637"/>
    </source>
</evidence>
<evidence type="ECO:0000255" key="3"/>
<evidence type="ECO:0000255" key="4">
    <source>
        <dbReference type="PROSITE-ProRule" id="PRU00114"/>
    </source>
</evidence>
<evidence type="ECO:0000269" key="5">
    <source>
    </source>
</evidence>
<evidence type="ECO:0000269" key="6">
    <source>
    </source>
</evidence>
<evidence type="ECO:0000269" key="7">
    <source>
    </source>
</evidence>
<evidence type="ECO:0000303" key="8">
    <source>
    </source>
</evidence>
<evidence type="ECO:0000303" key="9">
    <source>
    </source>
</evidence>
<dbReference type="EMBL" id="U08993">
    <property type="protein sequence ID" value="AAA57190.1"/>
    <property type="molecule type" value="mRNA"/>
</dbReference>
<dbReference type="EMBL" id="U08991">
    <property type="protein sequence ID" value="AAA57188.1"/>
    <property type="molecule type" value="mRNA"/>
</dbReference>
<dbReference type="EMBL" id="U08992">
    <property type="protein sequence ID" value="AAA57189.1"/>
    <property type="molecule type" value="mRNA"/>
</dbReference>
<dbReference type="PIR" id="I47165">
    <property type="entry name" value="I47165"/>
</dbReference>
<dbReference type="SMR" id="Q28942"/>
<dbReference type="FunCoup" id="Q28942">
    <property type="interactions" value="67"/>
</dbReference>
<dbReference type="STRING" id="9823.ENSSSCP00000050675"/>
<dbReference type="GlyCosmos" id="Q28942">
    <property type="glycosylation" value="4 sites, No reported glycans"/>
</dbReference>
<dbReference type="GlyGen" id="Q28942">
    <property type="glycosylation" value="3 sites"/>
</dbReference>
<dbReference type="iPTMnet" id="Q28942"/>
<dbReference type="PeptideAtlas" id="Q28942"/>
<dbReference type="InParanoid" id="Q28942"/>
<dbReference type="ChiTaRS" id="FCGR3B">
    <property type="organism name" value="pig"/>
</dbReference>
<dbReference type="Proteomes" id="UP000008227">
    <property type="component" value="Unplaced"/>
</dbReference>
<dbReference type="Proteomes" id="UP000314985">
    <property type="component" value="Unplaced"/>
</dbReference>
<dbReference type="Proteomes" id="UP000694570">
    <property type="component" value="Unplaced"/>
</dbReference>
<dbReference type="Proteomes" id="UP000694571">
    <property type="component" value="Unplaced"/>
</dbReference>
<dbReference type="Proteomes" id="UP000694720">
    <property type="component" value="Unplaced"/>
</dbReference>
<dbReference type="Proteomes" id="UP000694722">
    <property type="component" value="Unplaced"/>
</dbReference>
<dbReference type="Proteomes" id="UP000694723">
    <property type="component" value="Unplaced"/>
</dbReference>
<dbReference type="Proteomes" id="UP000694724">
    <property type="component" value="Unplaced"/>
</dbReference>
<dbReference type="Proteomes" id="UP000694725">
    <property type="component" value="Unplaced"/>
</dbReference>
<dbReference type="Proteomes" id="UP000694726">
    <property type="component" value="Unplaced"/>
</dbReference>
<dbReference type="Proteomes" id="UP000694727">
    <property type="component" value="Unplaced"/>
</dbReference>
<dbReference type="Proteomes" id="UP000694728">
    <property type="component" value="Unplaced"/>
</dbReference>
<dbReference type="GO" id="GO:0009897">
    <property type="term" value="C:external side of plasma membrane"/>
    <property type="evidence" value="ECO:0000318"/>
    <property type="project" value="GO_Central"/>
</dbReference>
<dbReference type="GO" id="GO:0019864">
    <property type="term" value="F:IgG binding"/>
    <property type="evidence" value="ECO:0007669"/>
    <property type="project" value="UniProtKB-KW"/>
</dbReference>
<dbReference type="GO" id="GO:0019770">
    <property type="term" value="F:IgG receptor activity"/>
    <property type="evidence" value="ECO:0000318"/>
    <property type="project" value="GO_Central"/>
</dbReference>
<dbReference type="GO" id="GO:0001788">
    <property type="term" value="P:antibody-dependent cellular cytotoxicity"/>
    <property type="evidence" value="ECO:0000318"/>
    <property type="project" value="GO_Central"/>
</dbReference>
<dbReference type="GO" id="GO:0007166">
    <property type="term" value="P:cell surface receptor signaling pathway"/>
    <property type="evidence" value="ECO:0000318"/>
    <property type="project" value="GO_Central"/>
</dbReference>
<dbReference type="CDD" id="cd05752">
    <property type="entry name" value="Ig1_FcgammaR_like"/>
    <property type="match status" value="1"/>
</dbReference>
<dbReference type="CDD" id="cd05753">
    <property type="entry name" value="Ig2_FcgammaR_like"/>
    <property type="match status" value="1"/>
</dbReference>
<dbReference type="FunFam" id="2.60.40.10:FF:000217">
    <property type="entry name" value="High affinity immunoglobulin gamma Fc receptor I"/>
    <property type="match status" value="1"/>
</dbReference>
<dbReference type="FunFam" id="2.60.40.10:FF:000356">
    <property type="entry name" value="Low affinity immunoglobulin gamma Fc region receptor III-A"/>
    <property type="match status" value="1"/>
</dbReference>
<dbReference type="Gene3D" id="2.60.40.10">
    <property type="entry name" value="Immunoglobulins"/>
    <property type="match status" value="2"/>
</dbReference>
<dbReference type="InterPro" id="IPR007110">
    <property type="entry name" value="Ig-like_dom"/>
</dbReference>
<dbReference type="InterPro" id="IPR036179">
    <property type="entry name" value="Ig-like_dom_sf"/>
</dbReference>
<dbReference type="InterPro" id="IPR013783">
    <property type="entry name" value="Ig-like_fold"/>
</dbReference>
<dbReference type="InterPro" id="IPR050488">
    <property type="entry name" value="Ig_Fc_receptor"/>
</dbReference>
<dbReference type="InterPro" id="IPR003599">
    <property type="entry name" value="Ig_sub"/>
</dbReference>
<dbReference type="PANTHER" id="PTHR11481">
    <property type="entry name" value="IMMUNOGLOBULIN FC RECEPTOR"/>
    <property type="match status" value="1"/>
</dbReference>
<dbReference type="PANTHER" id="PTHR11481:SF103">
    <property type="entry name" value="LOW AFFINITY IMMUNOGLOBULIN GAMMA FC REGION RECEPTOR III-A-RELATED"/>
    <property type="match status" value="1"/>
</dbReference>
<dbReference type="Pfam" id="PF13895">
    <property type="entry name" value="Ig_2"/>
    <property type="match status" value="2"/>
</dbReference>
<dbReference type="SMART" id="SM00409">
    <property type="entry name" value="IG"/>
    <property type="match status" value="2"/>
</dbReference>
<dbReference type="SUPFAM" id="SSF48726">
    <property type="entry name" value="Immunoglobulin"/>
    <property type="match status" value="2"/>
</dbReference>
<dbReference type="PROSITE" id="PS50835">
    <property type="entry name" value="IG_LIKE"/>
    <property type="match status" value="2"/>
</dbReference>